<keyword id="KW-0240">DNA-directed RNA polymerase</keyword>
<keyword id="KW-0460">Magnesium</keyword>
<keyword id="KW-0479">Metal-binding</keyword>
<keyword id="KW-0548">Nucleotidyltransferase</keyword>
<keyword id="KW-0804">Transcription</keyword>
<keyword id="KW-0808">Transferase</keyword>
<keyword id="KW-0862">Zinc</keyword>
<accession>A0Q866</accession>
<dbReference type="EC" id="2.7.7.6" evidence="1"/>
<dbReference type="EMBL" id="CP000439">
    <property type="protein sequence ID" value="ABK90431.1"/>
    <property type="molecule type" value="Genomic_DNA"/>
</dbReference>
<dbReference type="RefSeq" id="WP_003035026.1">
    <property type="nucleotide sequence ID" value="NC_008601.1"/>
</dbReference>
<dbReference type="SMR" id="A0Q866"/>
<dbReference type="KEGG" id="ftn:FTN_1567"/>
<dbReference type="KEGG" id="ftx:AW25_431"/>
<dbReference type="BioCyc" id="FTUL401614:G1G75-1619-MONOMER"/>
<dbReference type="Proteomes" id="UP000000762">
    <property type="component" value="Chromosome"/>
</dbReference>
<dbReference type="GO" id="GO:0000428">
    <property type="term" value="C:DNA-directed RNA polymerase complex"/>
    <property type="evidence" value="ECO:0007669"/>
    <property type="project" value="UniProtKB-KW"/>
</dbReference>
<dbReference type="GO" id="GO:0003677">
    <property type="term" value="F:DNA binding"/>
    <property type="evidence" value="ECO:0007669"/>
    <property type="project" value="UniProtKB-UniRule"/>
</dbReference>
<dbReference type="GO" id="GO:0003899">
    <property type="term" value="F:DNA-directed RNA polymerase activity"/>
    <property type="evidence" value="ECO:0007669"/>
    <property type="project" value="UniProtKB-UniRule"/>
</dbReference>
<dbReference type="GO" id="GO:0000287">
    <property type="term" value="F:magnesium ion binding"/>
    <property type="evidence" value="ECO:0007669"/>
    <property type="project" value="UniProtKB-UniRule"/>
</dbReference>
<dbReference type="GO" id="GO:0008270">
    <property type="term" value="F:zinc ion binding"/>
    <property type="evidence" value="ECO:0007669"/>
    <property type="project" value="UniProtKB-UniRule"/>
</dbReference>
<dbReference type="GO" id="GO:0006351">
    <property type="term" value="P:DNA-templated transcription"/>
    <property type="evidence" value="ECO:0007669"/>
    <property type="project" value="UniProtKB-UniRule"/>
</dbReference>
<dbReference type="CDD" id="cd02655">
    <property type="entry name" value="RNAP_beta'_C"/>
    <property type="match status" value="1"/>
</dbReference>
<dbReference type="CDD" id="cd01609">
    <property type="entry name" value="RNAP_beta'_N"/>
    <property type="match status" value="1"/>
</dbReference>
<dbReference type="FunFam" id="1.10.132.30:FF:000003">
    <property type="entry name" value="DNA-directed RNA polymerase subunit beta"/>
    <property type="match status" value="1"/>
</dbReference>
<dbReference type="Gene3D" id="1.10.132.30">
    <property type="match status" value="1"/>
</dbReference>
<dbReference type="Gene3D" id="1.10.150.390">
    <property type="match status" value="1"/>
</dbReference>
<dbReference type="Gene3D" id="1.10.1790.20">
    <property type="match status" value="1"/>
</dbReference>
<dbReference type="Gene3D" id="1.10.40.90">
    <property type="match status" value="1"/>
</dbReference>
<dbReference type="Gene3D" id="2.40.40.20">
    <property type="match status" value="1"/>
</dbReference>
<dbReference type="Gene3D" id="2.40.50.100">
    <property type="match status" value="3"/>
</dbReference>
<dbReference type="Gene3D" id="4.10.860.120">
    <property type="entry name" value="RNA polymerase II, clamp domain"/>
    <property type="match status" value="1"/>
</dbReference>
<dbReference type="Gene3D" id="1.10.274.100">
    <property type="entry name" value="RNA polymerase Rpb1, domain 3"/>
    <property type="match status" value="1"/>
</dbReference>
<dbReference type="HAMAP" id="MF_01322">
    <property type="entry name" value="RNApol_bact_RpoC"/>
    <property type="match status" value="1"/>
</dbReference>
<dbReference type="InterPro" id="IPR045867">
    <property type="entry name" value="DNA-dir_RpoC_beta_prime"/>
</dbReference>
<dbReference type="InterPro" id="IPR012754">
    <property type="entry name" value="DNA-dir_RpoC_beta_prime_bact"/>
</dbReference>
<dbReference type="InterPro" id="IPR000722">
    <property type="entry name" value="RNA_pol_asu"/>
</dbReference>
<dbReference type="InterPro" id="IPR006592">
    <property type="entry name" value="RNA_pol_N"/>
</dbReference>
<dbReference type="InterPro" id="IPR007080">
    <property type="entry name" value="RNA_pol_Rpb1_1"/>
</dbReference>
<dbReference type="InterPro" id="IPR007066">
    <property type="entry name" value="RNA_pol_Rpb1_3"/>
</dbReference>
<dbReference type="InterPro" id="IPR042102">
    <property type="entry name" value="RNA_pol_Rpb1_3_sf"/>
</dbReference>
<dbReference type="InterPro" id="IPR007083">
    <property type="entry name" value="RNA_pol_Rpb1_4"/>
</dbReference>
<dbReference type="InterPro" id="IPR007081">
    <property type="entry name" value="RNA_pol_Rpb1_5"/>
</dbReference>
<dbReference type="InterPro" id="IPR044893">
    <property type="entry name" value="RNA_pol_Rpb1_clamp_domain"/>
</dbReference>
<dbReference type="InterPro" id="IPR038120">
    <property type="entry name" value="Rpb1_funnel_sf"/>
</dbReference>
<dbReference type="NCBIfam" id="TIGR02386">
    <property type="entry name" value="rpoC_TIGR"/>
    <property type="match status" value="1"/>
</dbReference>
<dbReference type="PANTHER" id="PTHR19376">
    <property type="entry name" value="DNA-DIRECTED RNA POLYMERASE"/>
    <property type="match status" value="1"/>
</dbReference>
<dbReference type="PANTHER" id="PTHR19376:SF54">
    <property type="entry name" value="DNA-DIRECTED RNA POLYMERASE SUBUNIT BETA"/>
    <property type="match status" value="1"/>
</dbReference>
<dbReference type="Pfam" id="PF04997">
    <property type="entry name" value="RNA_pol_Rpb1_1"/>
    <property type="match status" value="1"/>
</dbReference>
<dbReference type="Pfam" id="PF00623">
    <property type="entry name" value="RNA_pol_Rpb1_2"/>
    <property type="match status" value="2"/>
</dbReference>
<dbReference type="Pfam" id="PF04983">
    <property type="entry name" value="RNA_pol_Rpb1_3"/>
    <property type="match status" value="1"/>
</dbReference>
<dbReference type="Pfam" id="PF05000">
    <property type="entry name" value="RNA_pol_Rpb1_4"/>
    <property type="match status" value="1"/>
</dbReference>
<dbReference type="Pfam" id="PF04998">
    <property type="entry name" value="RNA_pol_Rpb1_5"/>
    <property type="match status" value="1"/>
</dbReference>
<dbReference type="SMART" id="SM00663">
    <property type="entry name" value="RPOLA_N"/>
    <property type="match status" value="1"/>
</dbReference>
<dbReference type="SUPFAM" id="SSF64484">
    <property type="entry name" value="beta and beta-prime subunits of DNA dependent RNA-polymerase"/>
    <property type="match status" value="1"/>
</dbReference>
<name>RPOC_FRATN</name>
<protein>
    <recommendedName>
        <fullName evidence="1">DNA-directed RNA polymerase subunit beta'</fullName>
        <shortName evidence="1">RNAP subunit beta'</shortName>
        <ecNumber evidence="1">2.7.7.6</ecNumber>
    </recommendedName>
    <alternativeName>
        <fullName evidence="1">RNA polymerase subunit beta'</fullName>
    </alternativeName>
    <alternativeName>
        <fullName evidence="1">Transcriptase subunit beta'</fullName>
    </alternativeName>
</protein>
<gene>
    <name evidence="1" type="primary">rpoC</name>
    <name type="ordered locus">FTN_1567</name>
</gene>
<comment type="function">
    <text evidence="1">DNA-dependent RNA polymerase catalyzes the transcription of DNA into RNA using the four ribonucleoside triphosphates as substrates.</text>
</comment>
<comment type="catalytic activity">
    <reaction evidence="1">
        <text>RNA(n) + a ribonucleoside 5'-triphosphate = RNA(n+1) + diphosphate</text>
        <dbReference type="Rhea" id="RHEA:21248"/>
        <dbReference type="Rhea" id="RHEA-COMP:14527"/>
        <dbReference type="Rhea" id="RHEA-COMP:17342"/>
        <dbReference type="ChEBI" id="CHEBI:33019"/>
        <dbReference type="ChEBI" id="CHEBI:61557"/>
        <dbReference type="ChEBI" id="CHEBI:140395"/>
        <dbReference type="EC" id="2.7.7.6"/>
    </reaction>
</comment>
<comment type="cofactor">
    <cofactor evidence="1">
        <name>Mg(2+)</name>
        <dbReference type="ChEBI" id="CHEBI:18420"/>
    </cofactor>
    <text evidence="1">Binds 1 Mg(2+) ion per subunit.</text>
</comment>
<comment type="cofactor">
    <cofactor evidence="1">
        <name>Zn(2+)</name>
        <dbReference type="ChEBI" id="CHEBI:29105"/>
    </cofactor>
    <text evidence="1">Binds 2 Zn(2+) ions per subunit.</text>
</comment>
<comment type="subunit">
    <text evidence="1">The RNAP catalytic core consists of 2 alpha, 1 beta, 1 beta' and 1 omega subunit. When a sigma factor is associated with the core the holoenzyme is formed, which can initiate transcription.</text>
</comment>
<comment type="similarity">
    <text evidence="1">Belongs to the RNA polymerase beta' chain family.</text>
</comment>
<reference key="1">
    <citation type="journal article" date="2007" name="Genome Biol.">
        <title>Comparison of Francisella tularensis genomes reveals evolutionary events associated with the emergence of human pathogenic strains.</title>
        <authorList>
            <person name="Rohmer L."/>
            <person name="Fong C."/>
            <person name="Abmayr S."/>
            <person name="Wasnick M."/>
            <person name="Larson Freeman T.J."/>
            <person name="Radey M."/>
            <person name="Guina T."/>
            <person name="Svensson K."/>
            <person name="Hayden H.S."/>
            <person name="Jacobs M."/>
            <person name="Gallagher L.A."/>
            <person name="Manoil C."/>
            <person name="Ernst R.K."/>
            <person name="Drees B."/>
            <person name="Buckley D."/>
            <person name="Haugen E."/>
            <person name="Bovee D."/>
            <person name="Zhou Y."/>
            <person name="Chang J."/>
            <person name="Levy R."/>
            <person name="Lim R."/>
            <person name="Gillett W."/>
            <person name="Guenthener D."/>
            <person name="Kang A."/>
            <person name="Shaffer S.A."/>
            <person name="Taylor G."/>
            <person name="Chen J."/>
            <person name="Gallis B."/>
            <person name="D'Argenio D.A."/>
            <person name="Forsman M."/>
            <person name="Olson M.V."/>
            <person name="Goodlett D.R."/>
            <person name="Kaul R."/>
            <person name="Miller S.I."/>
            <person name="Brittnacher M.J."/>
        </authorList>
    </citation>
    <scope>NUCLEOTIDE SEQUENCE [LARGE SCALE GENOMIC DNA]</scope>
    <source>
        <strain>U112</strain>
    </source>
</reference>
<sequence>MNNGILHQNYNSKKFDIIKISLASPEVIRSWSHGEVKKPETINYRTFKPERDGLFCAKIFGPIKDYECLCGKYKRLKHRGVVCERCGVEVEQAKVRRERMGHIDLVCPVVHIWYLKSLPSRIGLFLDMPLKNVEKVLYFESYIVTDPGMTPLEKKQLLTDEEYAEALENYGYEFEASMGAEAIRDLLADTDIESEIELLQAEYEESKSTAKKEKAIKRLRLLETFQASGNKPEWMVMTVLPVLPPDLRPLVPIEGGRFATSDLNDLYRRVINRNNRLKKLLDLNAPDIIVRNEKRMLQEAVDALLDNGRRGRAVTGSNKRPLKSLADMIKGKQGRFRQNLLGKRVDYSGRSVITVGPSLRLHECGLPKKMALELFKPFVYSKLRLGGHATTIKQAKRMVELEEAVVWDILETVINEHPVLLNRAPTLHRLGIQAFEPRLIEGKAIQLHPLVCAAFNADFDGDQMAVHVPLTVESQLEARVLMMSTNNILSPASGQPIITPTQDIVLGLYYITREKEGARGEGKLFSSYEDVSRAYNSGTIDIHAKIKLRIDRQVFDTKGNTYNEKGVVNTTVGRALLLNILPEGLSFSLLNKVLVKKEISKIINQAFRVLGGKATVVLADKLMYAGFKYSTLSGVSVGVDDMTIPDNKEAKIEEAEKEIKQITEQYQSSLITENERYNNIINIWSKTSDEVGASMMDAISKDTVSINGEKKEIESFNSVYMMAKSGARGSYNQMRQLAGMRGLMAKPDGTMIETAITANFREGLSVLQYFTSTHGARKGLADTALKTANAGYLTRRLVDVAQDLVVIEEDCGTDDGLMFSAIVEDGEVKVPLVERALGRTLAADVVTEKGVVLLEAGTLLDENLVELLDDNGIDMIKVRSPITCKTRRGLCAKCYGRDLARERQVNVGESVGVIAAQSIGEPGTQLTMRTFHTGGAASLGITVSDIKVKTAGKIKFKNIRTVTNKEGQEIVISRAGEIIVSDTMGRVREQHKIPMGAVVPLASGKAVEIGDVIATWDPHAQPLITDVAGKVVLEDVIDGITSKHTYDDLTGQQTIEITSISQRTTSKNLKPVVKIVDEKGAELKSIPLAVGAVLNVADDSILEVGDIVAKIPLEGSKNKDITGGLPRVAELFEARRPKDAAILSPCDGMVRLGNRDTKEKQRIEIIDKNGHIVEEILLPKSRHLVVFDGEQVSRGDVLADGPTDPHDLLKYKGLEEFADYILIEAQSVYRMQGVVINDKHIETIVRQMLRKAVILDEGDSKFVKDESIELVRILEENDKLRKQGKKEVEYELVLMGITRSSLSTESFLSAASFQETTRVLTEASINSQIDNLRGLKENVLIGRLIPTGTGLAVRKESAKIEKMREELGVEDNMVFTDLSSFNPEEISFDSIQSQKEDKDINEDIEESLRNALESLDF</sequence>
<organism>
    <name type="scientific">Francisella tularensis subsp. novicida (strain U112)</name>
    <dbReference type="NCBI Taxonomy" id="401614"/>
    <lineage>
        <taxon>Bacteria</taxon>
        <taxon>Pseudomonadati</taxon>
        <taxon>Pseudomonadota</taxon>
        <taxon>Gammaproteobacteria</taxon>
        <taxon>Thiotrichales</taxon>
        <taxon>Francisellaceae</taxon>
        <taxon>Francisella</taxon>
    </lineage>
</organism>
<evidence type="ECO:0000255" key="1">
    <source>
        <dbReference type="HAMAP-Rule" id="MF_01322"/>
    </source>
</evidence>
<proteinExistence type="inferred from homology"/>
<feature type="chain" id="PRO_0000353370" description="DNA-directed RNA polymerase subunit beta'">
    <location>
        <begin position="1"/>
        <end position="1417"/>
    </location>
</feature>
<feature type="binding site" evidence="1">
    <location>
        <position position="68"/>
    </location>
    <ligand>
        <name>Zn(2+)</name>
        <dbReference type="ChEBI" id="CHEBI:29105"/>
        <label>1</label>
    </ligand>
</feature>
<feature type="binding site" evidence="1">
    <location>
        <position position="70"/>
    </location>
    <ligand>
        <name>Zn(2+)</name>
        <dbReference type="ChEBI" id="CHEBI:29105"/>
        <label>1</label>
    </ligand>
</feature>
<feature type="binding site" evidence="1">
    <location>
        <position position="83"/>
    </location>
    <ligand>
        <name>Zn(2+)</name>
        <dbReference type="ChEBI" id="CHEBI:29105"/>
        <label>1</label>
    </ligand>
</feature>
<feature type="binding site" evidence="1">
    <location>
        <position position="86"/>
    </location>
    <ligand>
        <name>Zn(2+)</name>
        <dbReference type="ChEBI" id="CHEBI:29105"/>
        <label>1</label>
    </ligand>
</feature>
<feature type="binding site" evidence="1">
    <location>
        <position position="458"/>
    </location>
    <ligand>
        <name>Mg(2+)</name>
        <dbReference type="ChEBI" id="CHEBI:18420"/>
    </ligand>
</feature>
<feature type="binding site" evidence="1">
    <location>
        <position position="460"/>
    </location>
    <ligand>
        <name>Mg(2+)</name>
        <dbReference type="ChEBI" id="CHEBI:18420"/>
    </ligand>
</feature>
<feature type="binding site" evidence="1">
    <location>
        <position position="462"/>
    </location>
    <ligand>
        <name>Mg(2+)</name>
        <dbReference type="ChEBI" id="CHEBI:18420"/>
    </ligand>
</feature>
<feature type="binding site" evidence="1">
    <location>
        <position position="811"/>
    </location>
    <ligand>
        <name>Zn(2+)</name>
        <dbReference type="ChEBI" id="CHEBI:29105"/>
        <label>2</label>
    </ligand>
</feature>
<feature type="binding site" evidence="1">
    <location>
        <position position="884"/>
    </location>
    <ligand>
        <name>Zn(2+)</name>
        <dbReference type="ChEBI" id="CHEBI:29105"/>
        <label>2</label>
    </ligand>
</feature>
<feature type="binding site" evidence="1">
    <location>
        <position position="891"/>
    </location>
    <ligand>
        <name>Zn(2+)</name>
        <dbReference type="ChEBI" id="CHEBI:29105"/>
        <label>2</label>
    </ligand>
</feature>
<feature type="binding site" evidence="1">
    <location>
        <position position="894"/>
    </location>
    <ligand>
        <name>Zn(2+)</name>
        <dbReference type="ChEBI" id="CHEBI:29105"/>
        <label>2</label>
    </ligand>
</feature>